<proteinExistence type="evidence at protein level"/>
<name>GPC5C_RAT</name>
<dbReference type="EMBL" id="BC105781">
    <property type="protein sequence ID" value="AAI05782.1"/>
    <property type="status" value="ALT_INIT"/>
    <property type="molecule type" value="mRNA"/>
</dbReference>
<dbReference type="RefSeq" id="XP_006247744.2">
    <property type="nucleotide sequence ID" value="XM_006247682.4"/>
</dbReference>
<dbReference type="RefSeq" id="XP_006247747.2">
    <property type="nucleotide sequence ID" value="XM_006247685.5"/>
</dbReference>
<dbReference type="RefSeq" id="XP_017452642.2">
    <property type="nucleotide sequence ID" value="XM_017597153.3"/>
</dbReference>
<dbReference type="SMR" id="Q3KRC4"/>
<dbReference type="FunCoup" id="Q3KRC4">
    <property type="interactions" value="61"/>
</dbReference>
<dbReference type="STRING" id="10116.ENSRNOP00000004256"/>
<dbReference type="GlyCosmos" id="Q3KRC4">
    <property type="glycosylation" value="1 site, No reported glycans"/>
</dbReference>
<dbReference type="GlyGen" id="Q3KRC4">
    <property type="glycosylation" value="1 site"/>
</dbReference>
<dbReference type="iPTMnet" id="Q3KRC4"/>
<dbReference type="PhosphoSitePlus" id="Q3KRC4"/>
<dbReference type="PaxDb" id="10116-ENSRNOP00000004256"/>
<dbReference type="GeneID" id="287805"/>
<dbReference type="AGR" id="RGD:1311408"/>
<dbReference type="RGD" id="1311408">
    <property type="gene designation" value="Gprc5c"/>
</dbReference>
<dbReference type="eggNOG" id="ENOG502QQEH">
    <property type="taxonomic scope" value="Eukaryota"/>
</dbReference>
<dbReference type="InParanoid" id="Q3KRC4"/>
<dbReference type="PhylomeDB" id="Q3KRC4"/>
<dbReference type="PRO" id="PR:Q3KRC4"/>
<dbReference type="Proteomes" id="UP000002494">
    <property type="component" value="Unplaced"/>
</dbReference>
<dbReference type="GO" id="GO:0070062">
    <property type="term" value="C:extracellular exosome"/>
    <property type="evidence" value="ECO:0000318"/>
    <property type="project" value="GO_Central"/>
</dbReference>
<dbReference type="GO" id="GO:0043231">
    <property type="term" value="C:intracellular membrane-bounded organelle"/>
    <property type="evidence" value="ECO:0000318"/>
    <property type="project" value="GO_Central"/>
</dbReference>
<dbReference type="GO" id="GO:0005886">
    <property type="term" value="C:plasma membrane"/>
    <property type="evidence" value="ECO:0000318"/>
    <property type="project" value="GO_Central"/>
</dbReference>
<dbReference type="GO" id="GO:0043235">
    <property type="term" value="C:receptor complex"/>
    <property type="evidence" value="ECO:0000266"/>
    <property type="project" value="RGD"/>
</dbReference>
<dbReference type="GO" id="GO:0004930">
    <property type="term" value="F:G protein-coupled receptor activity"/>
    <property type="evidence" value="ECO:0007669"/>
    <property type="project" value="UniProtKB-KW"/>
</dbReference>
<dbReference type="GO" id="GO:0030295">
    <property type="term" value="F:protein kinase activator activity"/>
    <property type="evidence" value="ECO:0000318"/>
    <property type="project" value="GO_Central"/>
</dbReference>
<dbReference type="CDD" id="cd15277">
    <property type="entry name" value="7tmC_RAIG3_GPRC5C"/>
    <property type="match status" value="1"/>
</dbReference>
<dbReference type="InterPro" id="IPR017978">
    <property type="entry name" value="GPCR_3_C"/>
</dbReference>
<dbReference type="InterPro" id="IPR051753">
    <property type="entry name" value="RA-inducible_GPCR3"/>
</dbReference>
<dbReference type="PANTHER" id="PTHR14511">
    <property type="entry name" value="G PROTEIN COUPLED RECEPTOR, CLASS C, GROUP 5"/>
    <property type="match status" value="1"/>
</dbReference>
<dbReference type="PANTHER" id="PTHR14511:SF15">
    <property type="entry name" value="G-PROTEIN COUPLED RECEPTOR FAMILY C GROUP 5 MEMBER C"/>
    <property type="match status" value="1"/>
</dbReference>
<dbReference type="Pfam" id="PF00003">
    <property type="entry name" value="7tm_3"/>
    <property type="match status" value="1"/>
</dbReference>
<dbReference type="PROSITE" id="PS50259">
    <property type="entry name" value="G_PROTEIN_RECEP_F3_4"/>
    <property type="match status" value="1"/>
</dbReference>
<gene>
    <name type="primary">Gprc5c</name>
</gene>
<keyword id="KW-1003">Cell membrane</keyword>
<keyword id="KW-0297">G-protein coupled receptor</keyword>
<keyword id="KW-0325">Glycoprotein</keyword>
<keyword id="KW-0472">Membrane</keyword>
<keyword id="KW-0597">Phosphoprotein</keyword>
<keyword id="KW-0675">Receptor</keyword>
<keyword id="KW-1185">Reference proteome</keyword>
<keyword id="KW-0732">Signal</keyword>
<keyword id="KW-0807">Transducer</keyword>
<keyword id="KW-0812">Transmembrane</keyword>
<keyword id="KW-1133">Transmembrane helix</keyword>
<feature type="signal peptide" evidence="4">
    <location>
        <begin position="1"/>
        <end position="22"/>
    </location>
</feature>
<feature type="chain" id="PRO_0000251136" description="G-protein coupled receptor family C group 5 member C">
    <location>
        <begin position="23"/>
        <end position="441"/>
    </location>
</feature>
<feature type="topological domain" description="Extracellular" evidence="4">
    <location>
        <begin position="23"/>
        <end position="49"/>
    </location>
</feature>
<feature type="transmembrane region" description="Helical" evidence="4">
    <location>
        <begin position="50"/>
        <end position="70"/>
    </location>
</feature>
<feature type="topological domain" description="Cytoplasmic" evidence="4">
    <location>
        <begin position="71"/>
        <end position="84"/>
    </location>
</feature>
<feature type="transmembrane region" description="Helical" evidence="4">
    <location>
        <begin position="85"/>
        <end position="105"/>
    </location>
</feature>
<feature type="topological domain" description="Extracellular" evidence="4">
    <location>
        <begin position="106"/>
        <end position="119"/>
    </location>
</feature>
<feature type="transmembrane region" description="Helical" evidence="4">
    <location>
        <begin position="120"/>
        <end position="140"/>
    </location>
</feature>
<feature type="topological domain" description="Cytoplasmic" evidence="4">
    <location>
        <begin position="141"/>
        <end position="154"/>
    </location>
</feature>
<feature type="transmembrane region" description="Helical" evidence="4">
    <location>
        <begin position="155"/>
        <end position="175"/>
    </location>
</feature>
<feature type="topological domain" description="Extracellular" evidence="4">
    <location>
        <begin position="176"/>
        <end position="207"/>
    </location>
</feature>
<feature type="transmembrane region" description="Helical" evidence="4">
    <location>
        <begin position="208"/>
        <end position="228"/>
    </location>
</feature>
<feature type="topological domain" description="Cytoplasmic" evidence="4">
    <location>
        <begin position="229"/>
        <end position="240"/>
    </location>
</feature>
<feature type="transmembrane region" description="Helical" evidence="4">
    <location>
        <begin position="241"/>
        <end position="261"/>
    </location>
</feature>
<feature type="topological domain" description="Extracellular" evidence="4">
    <location>
        <begin position="262"/>
        <end position="278"/>
    </location>
</feature>
<feature type="transmembrane region" description="Helical" evidence="4">
    <location>
        <begin position="279"/>
        <end position="299"/>
    </location>
</feature>
<feature type="topological domain" description="Cytoplasmic" evidence="4">
    <location>
        <begin position="300"/>
        <end position="441"/>
    </location>
</feature>
<feature type="region of interest" description="Disordered" evidence="5">
    <location>
        <begin position="419"/>
        <end position="441"/>
    </location>
</feature>
<feature type="compositionally biased region" description="Polar residues" evidence="5">
    <location>
        <begin position="430"/>
        <end position="441"/>
    </location>
</feature>
<feature type="modified residue" description="Phosphoserine" evidence="3">
    <location>
        <position position="343"/>
    </location>
</feature>
<feature type="modified residue" description="Phosphoserine" evidence="3">
    <location>
        <position position="382"/>
    </location>
</feature>
<feature type="modified residue" description="Phosphoserine" evidence="2">
    <location>
        <position position="402"/>
    </location>
</feature>
<feature type="modified residue" description="Phosphoserine" evidence="2">
    <location>
        <position position="405"/>
    </location>
</feature>
<feature type="modified residue" description="Phosphotyrosine" evidence="2">
    <location>
        <position position="413"/>
    </location>
</feature>
<feature type="modified residue" description="Phosphothreonine" evidence="3">
    <location>
        <position position="422"/>
    </location>
</feature>
<feature type="modified residue" description="Phosphoserine" evidence="7">
    <location>
        <position position="434"/>
    </location>
</feature>
<feature type="glycosylation site" description="N-linked (GlcNAc...) asparagine" evidence="4">
    <location>
        <position position="190"/>
    </location>
</feature>
<reference key="1">
    <citation type="journal article" date="2004" name="Genome Res.">
        <title>The status, quality, and expansion of the NIH full-length cDNA project: the Mammalian Gene Collection (MGC).</title>
        <authorList>
            <consortium name="The MGC Project Team"/>
        </authorList>
    </citation>
    <scope>NUCLEOTIDE SEQUENCE [LARGE SCALE MRNA]</scope>
    <source>
        <tissue>Prostate</tissue>
    </source>
</reference>
<reference key="2">
    <citation type="journal article" date="2012" name="Nat. Commun.">
        <title>Quantitative maps of protein phosphorylation sites across 14 different rat organs and tissues.</title>
        <authorList>
            <person name="Lundby A."/>
            <person name="Secher A."/>
            <person name="Lage K."/>
            <person name="Nordsborg N.B."/>
            <person name="Dmytriyev A."/>
            <person name="Lundby C."/>
            <person name="Olsen J.V."/>
        </authorList>
    </citation>
    <scope>PHOSPHORYLATION [LARGE SCALE ANALYSIS] AT SER-434</scope>
    <scope>IDENTIFICATION BY MASS SPECTROMETRY [LARGE SCALE ANALYSIS]</scope>
</reference>
<accession>Q3KRC4</accession>
<protein>
    <recommendedName>
        <fullName>G-protein coupled receptor family C group 5 member C</fullName>
    </recommendedName>
</protein>
<comment type="function">
    <text evidence="1">This retinoic acid-inducible G-protein coupled receptor provide evidence for a possible interaction between retinoid and G-protein signaling pathways.</text>
</comment>
<comment type="subcellular location">
    <subcellularLocation>
        <location>Cell membrane</location>
        <topology>Multi-pass membrane protein</topology>
    </subcellularLocation>
</comment>
<comment type="similarity">
    <text evidence="6">Belongs to the G-protein coupled receptor 3 family.</text>
</comment>
<comment type="sequence caution" evidence="6">
    <conflict type="erroneous initiation">
        <sequence resource="EMBL-CDS" id="AAI05782"/>
    </conflict>
</comment>
<sequence>MATHKTLLMCLGLPLFFPGALAQNHAPPGCSPDLDPLYYNLCDRSGAWGIVLEAVAGAGIITTFVLTIILVASLPFVQDTKKRSLLGTQVFFLLGTLGLFCLVFACVVKPDFSTCASRRFLFGVLFAICFSCLIAHTLSLNFLARKNHGPRGWVIFTVALLLTLVEVIINTEWLIITLVRGGGQVSTPGNGSADWTVTSPCAIANMDFVMALIYVMLLLLAAFLGAWPTLCGRFKRWRKHGVFVLLTTATSIAIWVVWIVMYTYGNKQHHSPTWDDPTLAIALAANAWTFVFFYVIPEVSQVTKPSPEQSYQGDMYPTRGVGYETILKEQTGQSMFVENKAFSMDEPASAKRPVSPYSGYNGQLLTSVYQPTEMALMHKGPSEGAYDVILPRATANSQVMGSANSTLRAEDMYMVQSHQVATPTKDGKISQDQSPKNKTRW</sequence>
<evidence type="ECO:0000250" key="1"/>
<evidence type="ECO:0000250" key="2">
    <source>
        <dbReference type="UniProtKB" id="Q8K3J9"/>
    </source>
</evidence>
<evidence type="ECO:0000250" key="3">
    <source>
        <dbReference type="UniProtKB" id="Q9NQ84"/>
    </source>
</evidence>
<evidence type="ECO:0000255" key="4"/>
<evidence type="ECO:0000256" key="5">
    <source>
        <dbReference type="SAM" id="MobiDB-lite"/>
    </source>
</evidence>
<evidence type="ECO:0000305" key="6"/>
<evidence type="ECO:0007744" key="7">
    <source>
    </source>
</evidence>
<organism>
    <name type="scientific">Rattus norvegicus</name>
    <name type="common">Rat</name>
    <dbReference type="NCBI Taxonomy" id="10116"/>
    <lineage>
        <taxon>Eukaryota</taxon>
        <taxon>Metazoa</taxon>
        <taxon>Chordata</taxon>
        <taxon>Craniata</taxon>
        <taxon>Vertebrata</taxon>
        <taxon>Euteleostomi</taxon>
        <taxon>Mammalia</taxon>
        <taxon>Eutheria</taxon>
        <taxon>Euarchontoglires</taxon>
        <taxon>Glires</taxon>
        <taxon>Rodentia</taxon>
        <taxon>Myomorpha</taxon>
        <taxon>Muroidea</taxon>
        <taxon>Muridae</taxon>
        <taxon>Murinae</taxon>
        <taxon>Rattus</taxon>
    </lineage>
</organism>